<accession>P0A9I3</accession>
<accession>O30979</accession>
<accession>P23483</accession>
<accession>P77652</accession>
<keyword id="KW-0963">Cytoplasm</keyword>
<keyword id="KW-0903">Direct protein sequencing</keyword>
<keyword id="KW-1185">Reference proteome</keyword>
<keyword id="KW-0677">Repeat</keyword>
<keyword id="KW-0678">Repressor</keyword>
<keyword id="KW-0804">Transcription</keyword>
<keyword id="KW-0805">Transcription regulation</keyword>
<sequence>MTLSSQHYLVITALGADRPGIVNTITRHVSSCGCNIEDSRLAMLGEEFTFIMLLSGSWNAITLIESTLPLKGAELDLLIVMKRTTARPRPPMPASVWVQVDVADSPHLIERFTALFDAHHMNIAELVSRTQPAENERAAQLHIQITAHSPASADAANIEQAFKALCTELNAQGSINVVNYSQHDEQDGVK</sequence>
<evidence type="ECO:0000255" key="1">
    <source>
        <dbReference type="PROSITE-ProRule" id="PRU01007"/>
    </source>
</evidence>
<evidence type="ECO:0000269" key="2">
    <source>
    </source>
</evidence>
<evidence type="ECO:0000305" key="3"/>
<reference key="1">
    <citation type="journal article" date="1998" name="J. Bacteriol.">
        <title>Promoter characterization and constitutive expression of the Escherichia coli gcvR gene.</title>
        <authorList>
            <person name="Ghrist A.C."/>
            <person name="Stauffer G.V."/>
        </authorList>
    </citation>
    <scope>NUCLEOTIDE SEQUENCE [GENOMIC DNA]</scope>
    <scope>PROTEIN SEQUENCE OF 2-15</scope>
    <scope>CHARACTERIZATION</scope>
    <source>
        <strain>K12</strain>
    </source>
</reference>
<reference key="2">
    <citation type="journal article" date="1997" name="DNA Res.">
        <title>Construction of a contiguous 874-kb sequence of the Escherichia coli-K12 genome corresponding to 50.0-68.8 min on the linkage map and analysis of its sequence features.</title>
        <authorList>
            <person name="Yamamoto Y."/>
            <person name="Aiba H."/>
            <person name="Baba T."/>
            <person name="Hayashi K."/>
            <person name="Inada T."/>
            <person name="Isono K."/>
            <person name="Itoh T."/>
            <person name="Kimura S."/>
            <person name="Kitagawa M."/>
            <person name="Makino K."/>
            <person name="Miki T."/>
            <person name="Mitsuhashi N."/>
            <person name="Mizobuchi K."/>
            <person name="Mori H."/>
            <person name="Nakade S."/>
            <person name="Nakamura Y."/>
            <person name="Nashimoto H."/>
            <person name="Oshima T."/>
            <person name="Oyama S."/>
            <person name="Saito N."/>
            <person name="Sampei G."/>
            <person name="Satoh Y."/>
            <person name="Sivasundaram S."/>
            <person name="Tagami H."/>
            <person name="Takahashi H."/>
            <person name="Takeda J."/>
            <person name="Takemoto K."/>
            <person name="Uehara K."/>
            <person name="Wada C."/>
            <person name="Yamagata S."/>
            <person name="Horiuchi T."/>
        </authorList>
    </citation>
    <scope>NUCLEOTIDE SEQUENCE [LARGE SCALE GENOMIC DNA]</scope>
    <source>
        <strain>K12 / W3110 / ATCC 27325 / DSM 5911</strain>
    </source>
</reference>
<reference key="3">
    <citation type="journal article" date="1997" name="Science">
        <title>The complete genome sequence of Escherichia coli K-12.</title>
        <authorList>
            <person name="Blattner F.R."/>
            <person name="Plunkett G. III"/>
            <person name="Bloch C.A."/>
            <person name="Perna N.T."/>
            <person name="Burland V."/>
            <person name="Riley M."/>
            <person name="Collado-Vides J."/>
            <person name="Glasner J.D."/>
            <person name="Rode C.K."/>
            <person name="Mayhew G.F."/>
            <person name="Gregor J."/>
            <person name="Davis N.W."/>
            <person name="Kirkpatrick H.A."/>
            <person name="Goeden M.A."/>
            <person name="Rose D.J."/>
            <person name="Mau B."/>
            <person name="Shao Y."/>
        </authorList>
    </citation>
    <scope>NUCLEOTIDE SEQUENCE [LARGE SCALE GENOMIC DNA]</scope>
    <source>
        <strain>K12 / MG1655 / ATCC 47076</strain>
    </source>
</reference>
<reference key="4">
    <citation type="journal article" date="2006" name="Mol. Syst. Biol.">
        <title>Highly accurate genome sequences of Escherichia coli K-12 strains MG1655 and W3110.</title>
        <authorList>
            <person name="Hayashi K."/>
            <person name="Morooka N."/>
            <person name="Yamamoto Y."/>
            <person name="Fujita K."/>
            <person name="Isono K."/>
            <person name="Choi S."/>
            <person name="Ohtsubo E."/>
            <person name="Baba T."/>
            <person name="Wanner B.L."/>
            <person name="Mori H."/>
            <person name="Horiuchi T."/>
        </authorList>
    </citation>
    <scope>NUCLEOTIDE SEQUENCE [LARGE SCALE GENOMIC DNA]</scope>
    <source>
        <strain>K12 / W3110 / ATCC 27325 / DSM 5911</strain>
    </source>
</reference>
<reference key="5">
    <citation type="journal article" date="1991" name="J. Gen. Microbiol.">
        <title>A molecular analysis of the 53.3 minute region of the Escherichia coli linkage map.</title>
        <authorList>
            <person name="Andrews S.C."/>
            <person name="Harrison P.M."/>
            <person name="Guest J.R."/>
        </authorList>
    </citation>
    <scope>NUCLEOTIDE SEQUENCE [GENOMIC DNA] OF 11-190</scope>
    <source>
        <strain>K12</strain>
    </source>
</reference>
<reference key="6">
    <citation type="journal article" date="1997" name="Microbiology">
        <title>A 12-cistron Escherichia coli operon (hyf) encoding a putative proton-translocating formate hydrogenlyase system.</title>
        <authorList>
            <person name="Andrews S.C."/>
            <person name="Berks B.C."/>
            <person name="McClay J."/>
            <person name="Ambler A."/>
            <person name="Quail M.A."/>
            <person name="Golby P."/>
            <person name="Guest J.R."/>
        </authorList>
    </citation>
    <scope>SEQUENCE REVISION TO C-TERMINUS</scope>
</reference>
<name>GCVR_ECOLI</name>
<dbReference type="EMBL" id="AF023337">
    <property type="protein sequence ID" value="AAC46232.1"/>
    <property type="molecule type" value="Genomic_DNA"/>
</dbReference>
<dbReference type="EMBL" id="U00096">
    <property type="protein sequence ID" value="AAC75532.2"/>
    <property type="molecule type" value="Genomic_DNA"/>
</dbReference>
<dbReference type="EMBL" id="AP009048">
    <property type="protein sequence ID" value="BAA16356.2"/>
    <property type="molecule type" value="Genomic_DNA"/>
</dbReference>
<dbReference type="EMBL" id="M63654">
    <property type="protein sequence ID" value="AAB88561.1"/>
    <property type="status" value="ALT_INIT"/>
    <property type="molecule type" value="Genomic_DNA"/>
</dbReference>
<dbReference type="RefSeq" id="NP_416974.4">
    <property type="nucleotide sequence ID" value="NC_000913.3"/>
</dbReference>
<dbReference type="RefSeq" id="WP_000176187.1">
    <property type="nucleotide sequence ID" value="NZ_STEB01000011.1"/>
</dbReference>
<dbReference type="SMR" id="P0A9I3"/>
<dbReference type="BioGRID" id="4260580">
    <property type="interactions" value="8"/>
</dbReference>
<dbReference type="BioGRID" id="851289">
    <property type="interactions" value="2"/>
</dbReference>
<dbReference type="DIP" id="DIP-9754N"/>
<dbReference type="FunCoup" id="P0A9I3">
    <property type="interactions" value="15"/>
</dbReference>
<dbReference type="IntAct" id="P0A9I3">
    <property type="interactions" value="3"/>
</dbReference>
<dbReference type="STRING" id="511145.b2479"/>
<dbReference type="jPOST" id="P0A9I3"/>
<dbReference type="PaxDb" id="511145-b2479"/>
<dbReference type="EnsemblBacteria" id="AAC75532">
    <property type="protein sequence ID" value="AAC75532"/>
    <property type="gene ID" value="b2479"/>
</dbReference>
<dbReference type="GeneID" id="946950"/>
<dbReference type="KEGG" id="ecj:JW2464"/>
<dbReference type="KEGG" id="eco:b2479"/>
<dbReference type="KEGG" id="ecoc:C3026_13760"/>
<dbReference type="PATRIC" id="fig|1411691.4.peg.4260"/>
<dbReference type="EchoBASE" id="EB1138"/>
<dbReference type="eggNOG" id="COG2716">
    <property type="taxonomic scope" value="Bacteria"/>
</dbReference>
<dbReference type="HOGENOM" id="CLU_095322_0_0_6"/>
<dbReference type="InParanoid" id="P0A9I3"/>
<dbReference type="OMA" id="CRASHEN"/>
<dbReference type="OrthoDB" id="5814713at2"/>
<dbReference type="PhylomeDB" id="P0A9I3"/>
<dbReference type="BioCyc" id="EcoCyc:EG11149-MONOMER"/>
<dbReference type="PRO" id="PR:P0A9I3"/>
<dbReference type="Proteomes" id="UP000000625">
    <property type="component" value="Chromosome"/>
</dbReference>
<dbReference type="GO" id="GO:0005829">
    <property type="term" value="C:cytosol"/>
    <property type="evidence" value="ECO:0000314"/>
    <property type="project" value="EcoCyc"/>
</dbReference>
<dbReference type="GO" id="GO:0006351">
    <property type="term" value="P:DNA-templated transcription"/>
    <property type="evidence" value="ECO:0000314"/>
    <property type="project" value="EcoCyc"/>
</dbReference>
<dbReference type="GO" id="GO:0006355">
    <property type="term" value="P:regulation of DNA-templated transcription"/>
    <property type="evidence" value="ECO:0007669"/>
    <property type="project" value="InterPro"/>
</dbReference>
<dbReference type="CDD" id="cd04893">
    <property type="entry name" value="ACT_GcvR_1"/>
    <property type="match status" value="1"/>
</dbReference>
<dbReference type="FunFam" id="3.30.70.260:FF:000005">
    <property type="entry name" value="Glycine cleavage system transcriptional repressor"/>
    <property type="match status" value="1"/>
</dbReference>
<dbReference type="FunFam" id="3.30.70.260:FF:000015">
    <property type="entry name" value="Glycine cleavage system transcriptional repressor"/>
    <property type="match status" value="1"/>
</dbReference>
<dbReference type="Gene3D" id="3.30.70.260">
    <property type="match status" value="2"/>
</dbReference>
<dbReference type="InterPro" id="IPR045865">
    <property type="entry name" value="ACT-like_dom_sf"/>
</dbReference>
<dbReference type="InterPro" id="IPR002912">
    <property type="entry name" value="ACT_dom"/>
</dbReference>
<dbReference type="InterPro" id="IPR016867">
    <property type="entry name" value="GcvR"/>
</dbReference>
<dbReference type="InterPro" id="IPR050990">
    <property type="entry name" value="UPF0237/GcvR_regulator"/>
</dbReference>
<dbReference type="NCBIfam" id="NF008612">
    <property type="entry name" value="PRK11589.1"/>
    <property type="match status" value="1"/>
</dbReference>
<dbReference type="PANTHER" id="PTHR34875:SF5">
    <property type="entry name" value="GLYCINE CLEAVAGE SYSTEM TRANSCRIPTIONAL REPRESSOR"/>
    <property type="match status" value="1"/>
</dbReference>
<dbReference type="PANTHER" id="PTHR34875">
    <property type="entry name" value="UPF0237 PROTEIN MJ1558"/>
    <property type="match status" value="1"/>
</dbReference>
<dbReference type="Pfam" id="PF13740">
    <property type="entry name" value="ACT_6"/>
    <property type="match status" value="1"/>
</dbReference>
<dbReference type="PIRSF" id="PIRSF028103">
    <property type="entry name" value="GcvR"/>
    <property type="match status" value="1"/>
</dbReference>
<dbReference type="SUPFAM" id="SSF55021">
    <property type="entry name" value="ACT-like"/>
    <property type="match status" value="2"/>
</dbReference>
<dbReference type="PROSITE" id="PS51671">
    <property type="entry name" value="ACT"/>
    <property type="match status" value="2"/>
</dbReference>
<comment type="function">
    <text>Negative transcriptional regulator of the glycine cleavage system operon (GCV). Does not autoregulate its own expression. It is not yet known how GcvR acts as a repressor. It does not seem to bind DNA. It could interact with GcvA and suppress its activatory activity.</text>
</comment>
<comment type="subcellular location">
    <subcellularLocation>
        <location>Cytoplasm</location>
    </subcellularLocation>
</comment>
<comment type="sequence caution" evidence="3">
    <conflict type="erroneous initiation">
        <sequence resource="EMBL-CDS" id="AAB88561"/>
    </conflict>
    <text>Truncated N-terminus.</text>
</comment>
<protein>
    <recommendedName>
        <fullName>Glycine cleavage system transcriptional repressor</fullName>
    </recommendedName>
    <alternativeName>
        <fullName>gcv operon repressor</fullName>
    </alternativeName>
</protein>
<gene>
    <name type="primary">gcvR</name>
    <name type="synonym">yffD</name>
    <name type="ordered locus">b2479</name>
    <name type="ordered locus">JW2464</name>
</gene>
<proteinExistence type="evidence at protein level"/>
<organism>
    <name type="scientific">Escherichia coli (strain K12)</name>
    <dbReference type="NCBI Taxonomy" id="83333"/>
    <lineage>
        <taxon>Bacteria</taxon>
        <taxon>Pseudomonadati</taxon>
        <taxon>Pseudomonadota</taxon>
        <taxon>Gammaproteobacteria</taxon>
        <taxon>Enterobacterales</taxon>
        <taxon>Enterobacteriaceae</taxon>
        <taxon>Escherichia</taxon>
    </lineage>
</organism>
<feature type="initiator methionine" description="Removed" evidence="2">
    <location>
        <position position="1"/>
    </location>
</feature>
<feature type="chain" id="PRO_0000087448" description="Glycine cleavage system transcriptional repressor">
    <location>
        <begin position="2"/>
        <end position="190"/>
    </location>
</feature>
<feature type="domain" description="ACT 1" evidence="1">
    <location>
        <begin position="10"/>
        <end position="91"/>
    </location>
</feature>
<feature type="domain" description="ACT 2" evidence="1">
    <location>
        <begin position="97"/>
        <end position="176"/>
    </location>
</feature>